<organism>
    <name type="scientific">Potato leafroll virus (strain Potato/Scotland/strain 1/1984)</name>
    <name type="common">PLrV</name>
    <dbReference type="NCBI Taxonomy" id="12046"/>
    <lineage>
        <taxon>Viruses</taxon>
        <taxon>Riboviria</taxon>
        <taxon>Orthornavirae</taxon>
        <taxon>Pisuviricota</taxon>
        <taxon>Pisoniviricetes</taxon>
        <taxon>Sobelivirales</taxon>
        <taxon>Solemoviridae</taxon>
        <taxon>Polerovirus</taxon>
        <taxon>Potato leafroll virus</taxon>
    </lineage>
</organism>
<accession>P0C769</accession>
<feature type="chain" id="PRO_0000390913" description="Uncharacterized protein P6">
    <location>
        <begin position="1"/>
        <end position="62"/>
    </location>
</feature>
<name>P6_PLRV1</name>
<sequence length="62" mass="7137">MLQSMVQTGPEFLHQGTHLNLEFPAIQELSLTFLRKPIYWRIGMPNTSTLVIPKKMSLLLLL</sequence>
<dbReference type="EMBL" id="D00530">
    <property type="status" value="NOT_ANNOTATED_CDS"/>
    <property type="molecule type" value="Genomic_RNA"/>
</dbReference>
<dbReference type="Proteomes" id="UP000006723">
    <property type="component" value="Segment"/>
</dbReference>
<organismHost>
    <name type="scientific">Solanum tuberosum</name>
    <name type="common">Potato</name>
    <dbReference type="NCBI Taxonomy" id="4113"/>
</organismHost>
<proteinExistence type="predicted"/>
<protein>
    <recommendedName>
        <fullName>Uncharacterized protein P6</fullName>
    </recommendedName>
    <alternativeName>
        <fullName>ORF6 protein</fullName>
    </alternativeName>
</protein>
<keyword id="KW-1185">Reference proteome</keyword>
<reference key="1">
    <citation type="journal article" date="1989" name="J. Gen. Virol.">
        <title>Nucleotide sequence of potato leafroll luteovirus RNA.</title>
        <authorList>
            <person name="Mayo M.A."/>
            <person name="Robinson D.J."/>
            <person name="Jolly C.A."/>
            <person name="Hyman L."/>
        </authorList>
    </citation>
    <scope>NUCLEOTIDE SEQUENCE [GENOMIC RNA]</scope>
</reference>